<comment type="function">
    <text evidence="1">Catalyzes the ATP-dependent conversion of 7-carboxy-7-deazaguanine (CDG) to 7-cyano-7-deazaguanine (preQ(0)).</text>
</comment>
<comment type="catalytic activity">
    <reaction evidence="1">
        <text>7-carboxy-7-deazaguanine + NH4(+) + ATP = 7-cyano-7-deazaguanine + ADP + phosphate + H2O + H(+)</text>
        <dbReference type="Rhea" id="RHEA:27982"/>
        <dbReference type="ChEBI" id="CHEBI:15377"/>
        <dbReference type="ChEBI" id="CHEBI:15378"/>
        <dbReference type="ChEBI" id="CHEBI:28938"/>
        <dbReference type="ChEBI" id="CHEBI:30616"/>
        <dbReference type="ChEBI" id="CHEBI:43474"/>
        <dbReference type="ChEBI" id="CHEBI:45075"/>
        <dbReference type="ChEBI" id="CHEBI:61036"/>
        <dbReference type="ChEBI" id="CHEBI:456216"/>
        <dbReference type="EC" id="6.3.4.20"/>
    </reaction>
</comment>
<comment type="cofactor">
    <cofactor evidence="1">
        <name>Zn(2+)</name>
        <dbReference type="ChEBI" id="CHEBI:29105"/>
    </cofactor>
    <text evidence="1">Binds 1 zinc ion per subunit.</text>
</comment>
<comment type="pathway">
    <text evidence="1">Purine metabolism; 7-cyano-7-deazaguanine biosynthesis.</text>
</comment>
<comment type="subunit">
    <text evidence="1">Homodimer.</text>
</comment>
<comment type="similarity">
    <text evidence="1">Belongs to the QueC family.</text>
</comment>
<protein>
    <recommendedName>
        <fullName evidence="1">7-cyano-7-deazaguanine synthase</fullName>
        <ecNumber evidence="1">6.3.4.20</ecNumber>
    </recommendedName>
    <alternativeName>
        <fullName evidence="1">7-cyano-7-carbaguanine synthase</fullName>
    </alternativeName>
    <alternativeName>
        <fullName evidence="1">PreQ(0) synthase</fullName>
    </alternativeName>
    <alternativeName>
        <fullName evidence="1">Queuosine biosynthesis protein QueC</fullName>
    </alternativeName>
</protein>
<proteinExistence type="inferred from homology"/>
<evidence type="ECO:0000255" key="1">
    <source>
        <dbReference type="HAMAP-Rule" id="MF_01633"/>
    </source>
</evidence>
<feature type="chain" id="PRO_1000215793" description="7-cyano-7-deazaguanine synthase">
    <location>
        <begin position="1"/>
        <end position="221"/>
    </location>
</feature>
<feature type="binding site" evidence="1">
    <location>
        <begin position="10"/>
        <end position="20"/>
    </location>
    <ligand>
        <name>ATP</name>
        <dbReference type="ChEBI" id="CHEBI:30616"/>
    </ligand>
</feature>
<feature type="binding site" evidence="1">
    <location>
        <position position="186"/>
    </location>
    <ligand>
        <name>Zn(2+)</name>
        <dbReference type="ChEBI" id="CHEBI:29105"/>
    </ligand>
</feature>
<feature type="binding site" evidence="1">
    <location>
        <position position="195"/>
    </location>
    <ligand>
        <name>Zn(2+)</name>
        <dbReference type="ChEBI" id="CHEBI:29105"/>
    </ligand>
</feature>
<feature type="binding site" evidence="1">
    <location>
        <position position="198"/>
    </location>
    <ligand>
        <name>Zn(2+)</name>
        <dbReference type="ChEBI" id="CHEBI:29105"/>
    </ligand>
</feature>
<feature type="binding site" evidence="1">
    <location>
        <position position="201"/>
    </location>
    <ligand>
        <name>Zn(2+)</name>
        <dbReference type="ChEBI" id="CHEBI:29105"/>
    </ligand>
</feature>
<keyword id="KW-0067">ATP-binding</keyword>
<keyword id="KW-0436">Ligase</keyword>
<keyword id="KW-0479">Metal-binding</keyword>
<keyword id="KW-0547">Nucleotide-binding</keyword>
<keyword id="KW-0671">Queuosine biosynthesis</keyword>
<keyword id="KW-0862">Zinc</keyword>
<reference key="1">
    <citation type="submission" date="2009-06" db="EMBL/GenBank/DDBJ databases">
        <title>Complete sequence of chromosome of Geopacillus sp. WCH70.</title>
        <authorList>
            <consortium name="US DOE Joint Genome Institute"/>
            <person name="Lucas S."/>
            <person name="Copeland A."/>
            <person name="Lapidus A."/>
            <person name="Glavina del Rio T."/>
            <person name="Dalin E."/>
            <person name="Tice H."/>
            <person name="Bruce D."/>
            <person name="Goodwin L."/>
            <person name="Pitluck S."/>
            <person name="Chertkov O."/>
            <person name="Brettin T."/>
            <person name="Detter J.C."/>
            <person name="Han C."/>
            <person name="Larimer F."/>
            <person name="Land M."/>
            <person name="Hauser L."/>
            <person name="Kyrpides N."/>
            <person name="Mikhailova N."/>
            <person name="Brumm P."/>
            <person name="Mead D.A."/>
            <person name="Richardson P."/>
        </authorList>
    </citation>
    <scope>NUCLEOTIDE SEQUENCE [LARGE SCALE GENOMIC DNA]</scope>
    <source>
        <strain>WCH70</strain>
    </source>
</reference>
<accession>C5D7Y2</accession>
<organism>
    <name type="scientific">Geobacillus sp. (strain WCH70)</name>
    <dbReference type="NCBI Taxonomy" id="471223"/>
    <lineage>
        <taxon>Bacteria</taxon>
        <taxon>Bacillati</taxon>
        <taxon>Bacillota</taxon>
        <taxon>Bacilli</taxon>
        <taxon>Bacillales</taxon>
        <taxon>Anoxybacillaceae</taxon>
        <taxon>Geobacillus</taxon>
    </lineage>
</organism>
<gene>
    <name evidence="1" type="primary">queC</name>
    <name type="ordered locus">GWCH70_0894</name>
</gene>
<sequence length="221" mass="24661">MKKEKAIVVFSGGQDSTTCLFWALKQFDEVEAVTFDYGQRHRLEIEVAASIAKELGVPHTVLDMSLLNQLAPNALTRSDIAIEQNEGQLPSTFVDGRNLLFLSFAAVLAKQKGARHLVTGVCETDFSGYPDCRDIFIKSLNVTLNLAMDYQFVIHTPLMWLTKAKTWKLADELGAFDFVRTKTLTCYNGIIADGCGECPACVLRRRGLEEYMKEKEGANQL</sequence>
<name>QUEC_GEOSW</name>
<dbReference type="EC" id="6.3.4.20" evidence="1"/>
<dbReference type="EMBL" id="CP001638">
    <property type="protein sequence ID" value="ACS23763.1"/>
    <property type="molecule type" value="Genomic_DNA"/>
</dbReference>
<dbReference type="SMR" id="C5D7Y2"/>
<dbReference type="STRING" id="471223.GWCH70_0894"/>
<dbReference type="KEGG" id="gwc:GWCH70_0894"/>
<dbReference type="eggNOG" id="COG0603">
    <property type="taxonomic scope" value="Bacteria"/>
</dbReference>
<dbReference type="HOGENOM" id="CLU_081854_0_0_9"/>
<dbReference type="OrthoDB" id="9789567at2"/>
<dbReference type="UniPathway" id="UPA00391"/>
<dbReference type="GO" id="GO:0005524">
    <property type="term" value="F:ATP binding"/>
    <property type="evidence" value="ECO:0007669"/>
    <property type="project" value="UniProtKB-UniRule"/>
</dbReference>
<dbReference type="GO" id="GO:0016879">
    <property type="term" value="F:ligase activity, forming carbon-nitrogen bonds"/>
    <property type="evidence" value="ECO:0007669"/>
    <property type="project" value="UniProtKB-UniRule"/>
</dbReference>
<dbReference type="GO" id="GO:0008270">
    <property type="term" value="F:zinc ion binding"/>
    <property type="evidence" value="ECO:0007669"/>
    <property type="project" value="UniProtKB-UniRule"/>
</dbReference>
<dbReference type="GO" id="GO:0008616">
    <property type="term" value="P:queuosine biosynthetic process"/>
    <property type="evidence" value="ECO:0007669"/>
    <property type="project" value="UniProtKB-UniRule"/>
</dbReference>
<dbReference type="CDD" id="cd01995">
    <property type="entry name" value="QueC-like"/>
    <property type="match status" value="1"/>
</dbReference>
<dbReference type="FunFam" id="3.40.50.620:FF:000017">
    <property type="entry name" value="7-cyano-7-deazaguanine synthase"/>
    <property type="match status" value="1"/>
</dbReference>
<dbReference type="Gene3D" id="3.40.50.620">
    <property type="entry name" value="HUPs"/>
    <property type="match status" value="1"/>
</dbReference>
<dbReference type="HAMAP" id="MF_01633">
    <property type="entry name" value="QueC"/>
    <property type="match status" value="1"/>
</dbReference>
<dbReference type="InterPro" id="IPR018317">
    <property type="entry name" value="QueC"/>
</dbReference>
<dbReference type="InterPro" id="IPR014729">
    <property type="entry name" value="Rossmann-like_a/b/a_fold"/>
</dbReference>
<dbReference type="NCBIfam" id="TIGR00364">
    <property type="entry name" value="7-cyano-7-deazaguanine synthase QueC"/>
    <property type="match status" value="1"/>
</dbReference>
<dbReference type="PANTHER" id="PTHR42914">
    <property type="entry name" value="7-CYANO-7-DEAZAGUANINE SYNTHASE"/>
    <property type="match status" value="1"/>
</dbReference>
<dbReference type="PANTHER" id="PTHR42914:SF1">
    <property type="entry name" value="7-CYANO-7-DEAZAGUANINE SYNTHASE"/>
    <property type="match status" value="1"/>
</dbReference>
<dbReference type="Pfam" id="PF06508">
    <property type="entry name" value="QueC"/>
    <property type="match status" value="1"/>
</dbReference>
<dbReference type="PIRSF" id="PIRSF006293">
    <property type="entry name" value="ExsB"/>
    <property type="match status" value="1"/>
</dbReference>
<dbReference type="SUPFAM" id="SSF52402">
    <property type="entry name" value="Adenine nucleotide alpha hydrolases-like"/>
    <property type="match status" value="1"/>
</dbReference>